<feature type="chain" id="PRO_0000437541" description="8-methylmenaquinol:fumarate reductase iron-sulfur subunit">
    <location>
        <begin position="1"/>
        <end position="319"/>
    </location>
</feature>
<feature type="domain" description="2Fe-2S ferredoxin-type" evidence="1">
    <location>
        <begin position="1"/>
        <end position="96"/>
    </location>
</feature>
<feature type="domain" description="4Fe-4S ferredoxin-type 1" evidence="2">
    <location>
        <begin position="139"/>
        <end position="168"/>
    </location>
</feature>
<feature type="domain" description="4Fe-4S ferredoxin-type 2" evidence="2">
    <location>
        <begin position="193"/>
        <end position="224"/>
    </location>
</feature>
<feature type="binding site" evidence="1">
    <location>
        <position position="51"/>
    </location>
    <ligand>
        <name>[2Fe-2S] cluster</name>
        <dbReference type="ChEBI" id="CHEBI:190135"/>
    </ligand>
</feature>
<feature type="binding site" evidence="1">
    <location>
        <position position="56"/>
    </location>
    <ligand>
        <name>[2Fe-2S] cluster</name>
        <dbReference type="ChEBI" id="CHEBI:190135"/>
    </ligand>
</feature>
<feature type="binding site" evidence="1">
    <location>
        <position position="59"/>
    </location>
    <ligand>
        <name>[2Fe-2S] cluster</name>
        <dbReference type="ChEBI" id="CHEBI:190135"/>
    </ligand>
</feature>
<feature type="binding site" evidence="1">
    <location>
        <position position="71"/>
    </location>
    <ligand>
        <name>[2Fe-2S] cluster</name>
        <dbReference type="ChEBI" id="CHEBI:190135"/>
    </ligand>
</feature>
<feature type="binding site" evidence="2">
    <location>
        <position position="148"/>
    </location>
    <ligand>
        <name>[4Fe-4S] cluster</name>
        <dbReference type="ChEBI" id="CHEBI:49883"/>
    </ligand>
</feature>
<feature type="binding site" evidence="2">
    <location>
        <position position="151"/>
    </location>
    <ligand>
        <name>[4Fe-4S] cluster</name>
        <dbReference type="ChEBI" id="CHEBI:49883"/>
    </ligand>
</feature>
<feature type="binding site" evidence="2">
    <location>
        <position position="154"/>
    </location>
    <ligand>
        <name>[4Fe-4S] cluster</name>
        <dbReference type="ChEBI" id="CHEBI:49883"/>
    </ligand>
</feature>
<feature type="binding site" evidence="2">
    <location>
        <position position="158"/>
    </location>
    <ligand>
        <name>[4Fe-4S] cluster</name>
        <dbReference type="ChEBI" id="CHEBI:49883"/>
    </ligand>
</feature>
<feature type="binding site" evidence="2">
    <location>
        <position position="204"/>
    </location>
    <ligand>
        <name>[4Fe-4S] cluster</name>
        <dbReference type="ChEBI" id="CHEBI:49883"/>
    </ligand>
</feature>
<feature type="binding site" evidence="2">
    <location>
        <position position="207"/>
    </location>
    <ligand>
        <name>[4Fe-4S] cluster</name>
        <dbReference type="ChEBI" id="CHEBI:49883"/>
    </ligand>
</feature>
<feature type="binding site" evidence="2">
    <location>
        <position position="210"/>
    </location>
    <ligand>
        <name>[4Fe-4S] cluster</name>
        <dbReference type="ChEBI" id="CHEBI:49883"/>
    </ligand>
</feature>
<feature type="binding site" evidence="2">
    <location>
        <position position="214"/>
    </location>
    <ligand>
        <name>[4Fe-4S] cluster</name>
        <dbReference type="ChEBI" id="CHEBI:49883"/>
    </ligand>
</feature>
<dbReference type="EC" id="1.3.5.-" evidence="3"/>
<dbReference type="EMBL" id="BX571662">
    <property type="protein sequence ID" value="CAE10930.1"/>
    <property type="molecule type" value="Genomic_DNA"/>
</dbReference>
<dbReference type="RefSeq" id="WP_011139713.1">
    <property type="nucleotide sequence ID" value="NC_005090.1"/>
</dbReference>
<dbReference type="SMR" id="Q7M826"/>
<dbReference type="STRING" id="273121.WS1921"/>
<dbReference type="KEGG" id="wsu:WS1921"/>
<dbReference type="eggNOG" id="COG0479">
    <property type="taxonomic scope" value="Bacteria"/>
</dbReference>
<dbReference type="HOGENOM" id="CLU_044838_3_1_7"/>
<dbReference type="Proteomes" id="UP000000422">
    <property type="component" value="Chromosome"/>
</dbReference>
<dbReference type="GO" id="GO:0042597">
    <property type="term" value="C:periplasmic space"/>
    <property type="evidence" value="ECO:0007669"/>
    <property type="project" value="UniProtKB-SubCell"/>
</dbReference>
<dbReference type="GO" id="GO:0005886">
    <property type="term" value="C:plasma membrane"/>
    <property type="evidence" value="ECO:0007669"/>
    <property type="project" value="UniProtKB-SubCell"/>
</dbReference>
<dbReference type="GO" id="GO:0051537">
    <property type="term" value="F:2 iron, 2 sulfur cluster binding"/>
    <property type="evidence" value="ECO:0007669"/>
    <property type="project" value="UniProtKB-KW"/>
</dbReference>
<dbReference type="GO" id="GO:0051539">
    <property type="term" value="F:4 iron, 4 sulfur cluster binding"/>
    <property type="evidence" value="ECO:0007669"/>
    <property type="project" value="UniProtKB-KW"/>
</dbReference>
<dbReference type="GO" id="GO:0009055">
    <property type="term" value="F:electron transfer activity"/>
    <property type="evidence" value="ECO:0007669"/>
    <property type="project" value="InterPro"/>
</dbReference>
<dbReference type="GO" id="GO:0046872">
    <property type="term" value="F:metal ion binding"/>
    <property type="evidence" value="ECO:0007669"/>
    <property type="project" value="UniProtKB-KW"/>
</dbReference>
<dbReference type="GO" id="GO:0016491">
    <property type="term" value="F:oxidoreductase activity"/>
    <property type="evidence" value="ECO:0007669"/>
    <property type="project" value="UniProtKB-KW"/>
</dbReference>
<dbReference type="GO" id="GO:0022904">
    <property type="term" value="P:respiratory electron transport chain"/>
    <property type="evidence" value="ECO:0007669"/>
    <property type="project" value="TreeGrafter"/>
</dbReference>
<dbReference type="GO" id="GO:0006099">
    <property type="term" value="P:tricarboxylic acid cycle"/>
    <property type="evidence" value="ECO:0007669"/>
    <property type="project" value="InterPro"/>
</dbReference>
<dbReference type="Gene3D" id="3.10.20.30">
    <property type="match status" value="1"/>
</dbReference>
<dbReference type="Gene3D" id="1.10.1060.10">
    <property type="entry name" value="Alpha-helical ferredoxin"/>
    <property type="match status" value="1"/>
</dbReference>
<dbReference type="InterPro" id="IPR036010">
    <property type="entry name" value="2Fe-2S_ferredoxin-like_sf"/>
</dbReference>
<dbReference type="InterPro" id="IPR006058">
    <property type="entry name" value="2Fe2S_fd_BS"/>
</dbReference>
<dbReference type="InterPro" id="IPR017896">
    <property type="entry name" value="4Fe4S_Fe-S-bd"/>
</dbReference>
<dbReference type="InterPro" id="IPR012675">
    <property type="entry name" value="Beta-grasp_dom_sf"/>
</dbReference>
<dbReference type="InterPro" id="IPR009051">
    <property type="entry name" value="Helical_ferredxn"/>
</dbReference>
<dbReference type="InterPro" id="IPR053608">
    <property type="entry name" value="SDH/FR_iron-sulfur_subunit"/>
</dbReference>
<dbReference type="InterPro" id="IPR050573">
    <property type="entry name" value="SDH/FRD_Iron-Sulfur"/>
</dbReference>
<dbReference type="InterPro" id="IPR004489">
    <property type="entry name" value="Succ_DH/fum_Rdtase_Fe-S"/>
</dbReference>
<dbReference type="InterPro" id="IPR025192">
    <property type="entry name" value="Succ_DH/fum_Rdtase_N"/>
</dbReference>
<dbReference type="NCBIfam" id="TIGR00384">
    <property type="entry name" value="dhsB"/>
    <property type="match status" value="1"/>
</dbReference>
<dbReference type="NCBIfam" id="NF042952">
    <property type="entry name" value="MFR_FeS_SdhB"/>
    <property type="match status" value="1"/>
</dbReference>
<dbReference type="PANTHER" id="PTHR11921:SF29">
    <property type="entry name" value="SUCCINATE DEHYDROGENASE [UBIQUINONE] IRON-SULFUR SUBUNIT, MITOCHONDRIAL"/>
    <property type="match status" value="1"/>
</dbReference>
<dbReference type="PANTHER" id="PTHR11921">
    <property type="entry name" value="SUCCINATE DEHYDROGENASE IRON-SULFUR PROTEIN"/>
    <property type="match status" value="1"/>
</dbReference>
<dbReference type="Pfam" id="PF13085">
    <property type="entry name" value="Fer2_3"/>
    <property type="match status" value="1"/>
</dbReference>
<dbReference type="Pfam" id="PF13183">
    <property type="entry name" value="Fer4_8"/>
    <property type="match status" value="1"/>
</dbReference>
<dbReference type="SUPFAM" id="SSF54292">
    <property type="entry name" value="2Fe-2S ferredoxin-like"/>
    <property type="match status" value="1"/>
</dbReference>
<dbReference type="SUPFAM" id="SSF46548">
    <property type="entry name" value="alpha-helical ferredoxin"/>
    <property type="match status" value="1"/>
</dbReference>
<dbReference type="PROSITE" id="PS00197">
    <property type="entry name" value="2FE2S_FER_1"/>
    <property type="match status" value="1"/>
</dbReference>
<dbReference type="PROSITE" id="PS00198">
    <property type="entry name" value="4FE4S_FER_1"/>
    <property type="match status" value="1"/>
</dbReference>
<dbReference type="PROSITE" id="PS51379">
    <property type="entry name" value="4FE4S_FER_2"/>
    <property type="match status" value="2"/>
</dbReference>
<sequence length="319" mass="35554">MKFIIDRFDGKKNYEQIYTLAKEDIEAKTLLGVLLLIKQTQDITLNFTASCRMAICGACAVRVNGHSYLACDTKMTELFEEYKNSDTFRISPLGNHRVISDLVVDWEPAIENLRKIKPGLVAKSEFSAKEGCQQNQEEFDRIIKQWDCILCGSCVSECNKFSADQSDYMEPFVFTQAWRLANDSRSKDPMIHVKPAVANGLWNCVHCHECTNRCPKHISAAEDIANLRVMAMKKGLNTGVGPAHAKAFHTDLVEGSGRLNEIRLALRIEGVATVARTGMAITLMRAGKMNPLEIFGGHTIKGHEDLVKMIDAAKAATKE</sequence>
<reference key="1">
    <citation type="journal article" date="2003" name="Proc. Natl. Acad. Sci. U.S.A.">
        <title>Complete genome sequence and analysis of Wolinella succinogenes.</title>
        <authorList>
            <person name="Baar C."/>
            <person name="Eppinger M."/>
            <person name="Raddatz G."/>
            <person name="Simon J."/>
            <person name="Lanz C."/>
            <person name="Klimmek O."/>
            <person name="Nandakumar R."/>
            <person name="Gross R."/>
            <person name="Rosinus A."/>
            <person name="Keller H."/>
            <person name="Jagtap P."/>
            <person name="Linke B."/>
            <person name="Meyer F."/>
            <person name="Lederer H."/>
            <person name="Schuster S.C."/>
        </authorList>
    </citation>
    <scope>NUCLEOTIDE SEQUENCE [LARGE SCALE GENOMIC DNA]</scope>
    <source>
        <strain>ATCC 29543 / DSM 1740 / CCUG 13145 / JCM 31913 / LMG 7466 / NCTC 11488 / FDC 602W</strain>
    </source>
</reference>
<reference key="2">
    <citation type="journal article" date="2009" name="Mol. Microbiol.">
        <title>Production, characterization and determination of the real catalytic properties of the putative 'succinate dehydrogenase' from Wolinella succinogenes.</title>
        <authorList>
            <person name="Juhnke H.D."/>
            <person name="Hiltscher H."/>
            <person name="Nasiri H.R."/>
            <person name="Schwalbe H."/>
            <person name="Lancaster C.R."/>
        </authorList>
    </citation>
    <scope>FUNCTION</scope>
    <scope>CATALYTIC ACTIVITY</scope>
    <scope>SUBCELLULAR LOCATION</scope>
    <scope>SUBUNIT</scope>
    <scope>IDENTIFICATION BY MASS SPECTROMETRY</scope>
    <source>
        <strain>ATCC 29543 / DSM 1740 / CCUG 13145 / JCM 31913 / LMG 7466 / NCTC 11488 / FDC 602W</strain>
    </source>
</reference>
<comment type="function">
    <text evidence="3">Iron-sulfur subunit of 8-methylmenaquinol:fumarate reductase (MFR), that catalyzes the reduction of fumarate using 8-methylmenaquinol-6 as electron donor. The complex shows no succinate oxidation activity. Is involved in anaerobic metabolism.</text>
</comment>
<comment type="catalytic activity">
    <reaction evidence="3">
        <text>8-methylmenaquinone-6 + succinate = 8-methylmenaquinol-6 + fumarate</text>
        <dbReference type="Rhea" id="RHEA:51848"/>
        <dbReference type="ChEBI" id="CHEBI:29806"/>
        <dbReference type="ChEBI" id="CHEBI:30031"/>
        <dbReference type="ChEBI" id="CHEBI:134356"/>
        <dbReference type="ChEBI" id="CHEBI:134357"/>
    </reaction>
</comment>
<comment type="cofactor">
    <cofactor evidence="1">
        <name>[2Fe-2S] cluster</name>
        <dbReference type="ChEBI" id="CHEBI:190135"/>
    </cofactor>
    <text evidence="1">Binds 1 2Fe-2S cluster.</text>
</comment>
<comment type="cofactor">
    <cofactor evidence="2">
        <name>[4Fe-4S] cluster</name>
        <dbReference type="ChEBI" id="CHEBI:49883"/>
    </cofactor>
    <text evidence="2">Binds 2 [4Fe-4S] cluster.</text>
</comment>
<comment type="subunit">
    <text evidence="3">The MFR complex is composed of three subunits: a flavoprotein (SdhA), an iron-sulfur protein (SdhB), and one hydrophobic anchor protein (SdhE).</text>
</comment>
<comment type="subcellular location">
    <subcellularLocation>
        <location evidence="3">Periplasm</location>
    </subcellularLocation>
    <subcellularLocation>
        <location evidence="3">Cell membrane</location>
        <topology evidence="6">Peripheral membrane protein</topology>
        <orientation evidence="3">Periplasmic side</orientation>
    </subcellularLocation>
</comment>
<comment type="similarity">
    <text evidence="5">Belongs to the succinate dehydrogenase/fumarate reductase iron-sulfur protein family.</text>
</comment>
<name>MFRB_WOLSU</name>
<evidence type="ECO:0000255" key="1">
    <source>
        <dbReference type="PROSITE-ProRule" id="PRU00465"/>
    </source>
</evidence>
<evidence type="ECO:0000255" key="2">
    <source>
        <dbReference type="PROSITE-ProRule" id="PRU00711"/>
    </source>
</evidence>
<evidence type="ECO:0000269" key="3">
    <source>
    </source>
</evidence>
<evidence type="ECO:0000303" key="4">
    <source>
    </source>
</evidence>
<evidence type="ECO:0000305" key="5"/>
<evidence type="ECO:0000305" key="6">
    <source>
    </source>
</evidence>
<evidence type="ECO:0000312" key="7">
    <source>
        <dbReference type="EMBL" id="CAE10930.1"/>
    </source>
</evidence>
<accession>Q7M826</accession>
<proteinExistence type="evidence at protein level"/>
<gene>
    <name evidence="4 7" type="primary">sdhB</name>
    <name evidence="7" type="ordered locus">WS1921</name>
</gene>
<protein>
    <recommendedName>
        <fullName evidence="4">8-methylmenaquinol:fumarate reductase iron-sulfur subunit</fullName>
        <shortName evidence="4">MFR iron-sulfur subunit</shortName>
        <ecNumber evidence="3">1.3.5.-</ecNumber>
    </recommendedName>
</protein>
<organism>
    <name type="scientific">Wolinella succinogenes (strain ATCC 29543 / DSM 1740 / CCUG 13145 / JCM 31913 / LMG 7466 / NCTC 11488 / FDC 602W)</name>
    <name type="common">Vibrio succinogenes</name>
    <dbReference type="NCBI Taxonomy" id="273121"/>
    <lineage>
        <taxon>Bacteria</taxon>
        <taxon>Pseudomonadati</taxon>
        <taxon>Campylobacterota</taxon>
        <taxon>Epsilonproteobacteria</taxon>
        <taxon>Campylobacterales</taxon>
        <taxon>Helicobacteraceae</taxon>
        <taxon>Wolinella</taxon>
    </lineage>
</organism>
<keyword id="KW-0001">2Fe-2S</keyword>
<keyword id="KW-0004">4Fe-4S</keyword>
<keyword id="KW-1003">Cell membrane</keyword>
<keyword id="KW-0249">Electron transport</keyword>
<keyword id="KW-0408">Iron</keyword>
<keyword id="KW-0411">Iron-sulfur</keyword>
<keyword id="KW-0472">Membrane</keyword>
<keyword id="KW-0479">Metal-binding</keyword>
<keyword id="KW-0560">Oxidoreductase</keyword>
<keyword id="KW-0574">Periplasm</keyword>
<keyword id="KW-1185">Reference proteome</keyword>
<keyword id="KW-0813">Transport</keyword>